<protein>
    <recommendedName>
        <fullName>Acyl-CoA-binding protein 2</fullName>
    </recommendedName>
    <alternativeName>
        <fullName>ACBP type 2</fullName>
    </alternativeName>
</protein>
<feature type="initiator methionine" description="Removed" evidence="3">
    <location>
        <position position="1"/>
    </location>
</feature>
<feature type="chain" id="PRO_0000214015" description="Acyl-CoA-binding protein 2">
    <location>
        <begin position="2"/>
        <end position="87"/>
    </location>
</feature>
<feature type="domain" description="ACB" evidence="2">
    <location>
        <begin position="2"/>
        <end position="87"/>
    </location>
</feature>
<feature type="binding site" evidence="1">
    <location>
        <begin position="29"/>
        <end position="33"/>
    </location>
    <ligand>
        <name>an acyl-CoA</name>
        <dbReference type="ChEBI" id="CHEBI:58342"/>
    </ligand>
</feature>
<feature type="binding site" evidence="1">
    <location>
        <position position="51"/>
    </location>
    <ligand>
        <name>an acyl-CoA</name>
        <dbReference type="ChEBI" id="CHEBI:58342"/>
    </ligand>
</feature>
<feature type="binding site" evidence="1">
    <location>
        <position position="55"/>
    </location>
    <ligand>
        <name>an acyl-CoA</name>
        <dbReference type="ChEBI" id="CHEBI:58342"/>
    </ligand>
</feature>
<feature type="binding site" evidence="1">
    <location>
        <position position="74"/>
    </location>
    <ligand>
        <name>an acyl-CoA</name>
        <dbReference type="ChEBI" id="CHEBI:58342"/>
    </ligand>
</feature>
<gene>
    <name type="primary">ACB2</name>
</gene>
<name>ACBP2_SACPS</name>
<reference key="1">
    <citation type="journal article" date="1997" name="Yeast">
        <title>Saccharomyces carlsbergensis contains two functional genes encoding the acyl-CoA binding protein, one similar to the ACB1 gene from S. cerevisiae and one identical to the ACB1 gene from S. monacensis.</title>
        <authorList>
            <person name="Borsting C."/>
            <person name="Hummel R."/>
            <person name="Schultz E.R."/>
            <person name="Rose T.M."/>
            <person name="Pedersen M.B."/>
            <person name="Knudsen J."/>
            <person name="Kristiansen K."/>
        </authorList>
    </citation>
    <scope>NUCLEOTIDE SEQUENCE [GENOMIC DNA]</scope>
    <source>
        <strain>AJL 2155</strain>
    </source>
</reference>
<reference key="2">
    <citation type="journal article" date="1994" name="Biochem. J.">
        <title>Yeast acyl-CoA-binding protein: acyl-CoA-binding affinity and effect on intracellular acyl-CoA pool size.</title>
        <authorList>
            <person name="Knudsen J."/>
            <person name="Faergeman N.J."/>
            <person name="Skoett H."/>
            <person name="Hummel R."/>
            <person name="Boersting C."/>
            <person name="Rose T.M."/>
            <person name="Andersen J.S."/>
            <person name="Hoejrup P."/>
            <person name="Roepstorff P."/>
            <person name="Kristiansen K."/>
        </authorList>
    </citation>
    <scope>PROTEIN SEQUENCE OF 2-87</scope>
    <source>
        <strain>BK 2208</strain>
    </source>
</reference>
<proteinExistence type="evidence at protein level"/>
<sequence length="87" mass="10084">MVSQLFEEKAKAVNELPTKPSTDELLELYGLYKQATVGDNDKEKPGIFNMKDRYKWEAWEDLKGKSQEDAEKEYIAYVDNLIAKYSS</sequence>
<accession>P61867</accession>
<accession>Q92272</accession>
<accession>Q96496</accession>
<comment type="function">
    <text evidence="1">Binds medium- and long-chain acyl-CoA esters with very high affinity and may function as an intracellular carrier of acyl-CoA esters.</text>
</comment>
<comment type="similarity">
    <text evidence="4">Belongs to the ACBP family.</text>
</comment>
<organism>
    <name type="scientific">Saccharomyces pastorianus</name>
    <name type="common">Lager yeast</name>
    <name type="synonym">Saccharomyces cerevisiae x Saccharomyces eubayanus</name>
    <dbReference type="NCBI Taxonomy" id="27292"/>
    <lineage>
        <taxon>Eukaryota</taxon>
        <taxon>Fungi</taxon>
        <taxon>Dikarya</taxon>
        <taxon>Ascomycota</taxon>
        <taxon>Saccharomycotina</taxon>
        <taxon>Saccharomycetes</taxon>
        <taxon>Saccharomycetales</taxon>
        <taxon>Saccharomycetaceae</taxon>
        <taxon>Saccharomyces</taxon>
    </lineage>
</organism>
<evidence type="ECO:0000250" key="1"/>
<evidence type="ECO:0000255" key="2">
    <source>
        <dbReference type="PROSITE-ProRule" id="PRU00573"/>
    </source>
</evidence>
<evidence type="ECO:0000269" key="3">
    <source>
    </source>
</evidence>
<evidence type="ECO:0000305" key="4"/>
<keyword id="KW-0903">Direct protein sequencing</keyword>
<keyword id="KW-0446">Lipid-binding</keyword>
<keyword id="KW-0813">Transport</keyword>
<dbReference type="EMBL" id="Y08690">
    <property type="protein sequence ID" value="CAA69948.1"/>
    <property type="molecule type" value="Genomic_DNA"/>
</dbReference>
<dbReference type="SMR" id="P61867"/>
<dbReference type="OrthoDB" id="346910at2759"/>
<dbReference type="GO" id="GO:0000062">
    <property type="term" value="F:fatty-acyl-CoA binding"/>
    <property type="evidence" value="ECO:0007669"/>
    <property type="project" value="InterPro"/>
</dbReference>
<dbReference type="GO" id="GO:0006631">
    <property type="term" value="P:fatty acid metabolic process"/>
    <property type="evidence" value="ECO:0007669"/>
    <property type="project" value="TreeGrafter"/>
</dbReference>
<dbReference type="FunFam" id="1.20.80.10:FF:000010">
    <property type="entry name" value="Acyl-CoA-binding domain-containing protein 5"/>
    <property type="match status" value="1"/>
</dbReference>
<dbReference type="Gene3D" id="1.20.80.10">
    <property type="match status" value="1"/>
</dbReference>
<dbReference type="InterPro" id="IPR022408">
    <property type="entry name" value="Acyl-CoA-binding_prot_CS"/>
</dbReference>
<dbReference type="InterPro" id="IPR000582">
    <property type="entry name" value="Acyl-CoA-binding_protein"/>
</dbReference>
<dbReference type="InterPro" id="IPR035984">
    <property type="entry name" value="Acyl-CoA-binding_sf"/>
</dbReference>
<dbReference type="InterPro" id="IPR014352">
    <property type="entry name" value="FERM/acyl-CoA-bd_prot_sf"/>
</dbReference>
<dbReference type="PANTHER" id="PTHR23310:SF62">
    <property type="entry name" value="ACYL-COA BINDING PROTEIN 1, ISOFORM A"/>
    <property type="match status" value="1"/>
</dbReference>
<dbReference type="PANTHER" id="PTHR23310">
    <property type="entry name" value="ACYL-COA-BINDING PROTEIN, ACBP"/>
    <property type="match status" value="1"/>
</dbReference>
<dbReference type="Pfam" id="PF00887">
    <property type="entry name" value="ACBP"/>
    <property type="match status" value="1"/>
</dbReference>
<dbReference type="PRINTS" id="PR00689">
    <property type="entry name" value="ACOABINDINGP"/>
</dbReference>
<dbReference type="SUPFAM" id="SSF47027">
    <property type="entry name" value="Acyl-CoA binding protein"/>
    <property type="match status" value="1"/>
</dbReference>
<dbReference type="PROSITE" id="PS00880">
    <property type="entry name" value="ACB_1"/>
    <property type="match status" value="1"/>
</dbReference>
<dbReference type="PROSITE" id="PS51228">
    <property type="entry name" value="ACB_2"/>
    <property type="match status" value="1"/>
</dbReference>